<sequence length="291" mass="32155">MGTPWRKRKGIAGPGLPDLSCALVLQPRAQVGTMSPAIALAFLPLVVTLLVRYRHYFRLLVRTVLLRSLRDCLSGLRIEERAFSYVLTHALPGDPGHILTTLDHWSSRCEYLSHMGPVKGQILMRLVEEKAPACVLELGTYCGYSTLLIARALPPGGRLLTVERDPRTAAVAEKLIRLAGFDEHMVELIVGSSEDVIPCLRTQYQLSRADLVLLAHRPRCYLRDLQLLEAHALLPAGATVLADHVLFPGAPRFLQYAKSCGRYRCRLHHTGLPDFPAIKDGIAQLTYAGPG</sequence>
<reference key="1">
    <citation type="journal article" date="2008" name="Nat. Genet.">
        <title>Mutations of LRTOMT, a fusion gene with alternative reading frames, cause nonsyndromic deafness in humans.</title>
        <authorList>
            <person name="Ahmed Z.M."/>
            <person name="Masmoudi S."/>
            <person name="Kalay E."/>
            <person name="Belyantseva I.A."/>
            <person name="Mosrati M.A."/>
            <person name="Collin R.W.J."/>
            <person name="Riazuddin S."/>
            <person name="Hmani-Aifa M."/>
            <person name="Venselaar H."/>
            <person name="Kawar M.N."/>
            <person name="Tlili A."/>
            <person name="van der Zwaag B."/>
            <person name="Khan S.Y."/>
            <person name="Ayadi L."/>
            <person name="Riazuddin S.A."/>
            <person name="Morell R.J."/>
            <person name="Griffith A.J."/>
            <person name="Charfedine I."/>
            <person name="Caylan R."/>
            <person name="Oostrik J."/>
            <person name="Karaguzel A."/>
            <person name="Ghorbel A."/>
            <person name="Riazuddin S."/>
            <person name="Friedman T.B."/>
            <person name="Ayadi H."/>
            <person name="Kremer H."/>
        </authorList>
    </citation>
    <scope>NUCLEOTIDE SEQUENCE [MRNA] (ISOFORMS 1 AND 2)</scope>
    <scope>VARIANTS DFNB63 GLN-81; ARG-105 AND LYS-110</scope>
    <source>
        <tissue>Brain</tissue>
    </source>
</reference>
<reference evidence="12" key="2">
    <citation type="journal article" date="2004" name="Proc. Natl. Acad. Sci. U.S.A.">
        <title>Large-scale cDNA transfection screening for genes related to cancer development and progression.</title>
        <authorList>
            <person name="Wan D."/>
            <person name="Gong Y."/>
            <person name="Qin W."/>
            <person name="Zhang P."/>
            <person name="Li J."/>
            <person name="Wei L."/>
            <person name="Zhou X."/>
            <person name="Li H."/>
            <person name="Qiu X."/>
            <person name="Zhong F."/>
            <person name="He L."/>
            <person name="Yu J."/>
            <person name="Yao G."/>
            <person name="Jiang H."/>
            <person name="Qian L."/>
            <person name="Yu Y."/>
            <person name="Shu H."/>
            <person name="Chen X."/>
            <person name="Xu H."/>
            <person name="Guo M."/>
            <person name="Pan Z."/>
            <person name="Chen Y."/>
            <person name="Ge C."/>
            <person name="Yang S."/>
            <person name="Gu J."/>
        </authorList>
    </citation>
    <scope>NUCLEOTIDE SEQUENCE [LARGE SCALE MRNA] (ISOFORM 2)</scope>
</reference>
<reference key="3">
    <citation type="journal article" date="2004" name="Nat. Genet.">
        <title>Complete sequencing and characterization of 21,243 full-length human cDNAs.</title>
        <authorList>
            <person name="Ota T."/>
            <person name="Suzuki Y."/>
            <person name="Nishikawa T."/>
            <person name="Otsuki T."/>
            <person name="Sugiyama T."/>
            <person name="Irie R."/>
            <person name="Wakamatsu A."/>
            <person name="Hayashi K."/>
            <person name="Sato H."/>
            <person name="Nagai K."/>
            <person name="Kimura K."/>
            <person name="Makita H."/>
            <person name="Sekine M."/>
            <person name="Obayashi M."/>
            <person name="Nishi T."/>
            <person name="Shibahara T."/>
            <person name="Tanaka T."/>
            <person name="Ishii S."/>
            <person name="Yamamoto J."/>
            <person name="Saito K."/>
            <person name="Kawai Y."/>
            <person name="Isono Y."/>
            <person name="Nakamura Y."/>
            <person name="Nagahari K."/>
            <person name="Murakami K."/>
            <person name="Yasuda T."/>
            <person name="Iwayanagi T."/>
            <person name="Wagatsuma M."/>
            <person name="Shiratori A."/>
            <person name="Sudo H."/>
            <person name="Hosoiri T."/>
            <person name="Kaku Y."/>
            <person name="Kodaira H."/>
            <person name="Kondo H."/>
            <person name="Sugawara M."/>
            <person name="Takahashi M."/>
            <person name="Kanda K."/>
            <person name="Yokoi T."/>
            <person name="Furuya T."/>
            <person name="Kikkawa E."/>
            <person name="Omura Y."/>
            <person name="Abe K."/>
            <person name="Kamihara K."/>
            <person name="Katsuta N."/>
            <person name="Sato K."/>
            <person name="Tanikawa M."/>
            <person name="Yamazaki M."/>
            <person name="Ninomiya K."/>
            <person name="Ishibashi T."/>
            <person name="Yamashita H."/>
            <person name="Murakawa K."/>
            <person name="Fujimori K."/>
            <person name="Tanai H."/>
            <person name="Kimata M."/>
            <person name="Watanabe M."/>
            <person name="Hiraoka S."/>
            <person name="Chiba Y."/>
            <person name="Ishida S."/>
            <person name="Ono Y."/>
            <person name="Takiguchi S."/>
            <person name="Watanabe S."/>
            <person name="Yosida M."/>
            <person name="Hotuta T."/>
            <person name="Kusano J."/>
            <person name="Kanehori K."/>
            <person name="Takahashi-Fujii A."/>
            <person name="Hara H."/>
            <person name="Tanase T.-O."/>
            <person name="Nomura Y."/>
            <person name="Togiya S."/>
            <person name="Komai F."/>
            <person name="Hara R."/>
            <person name="Takeuchi K."/>
            <person name="Arita M."/>
            <person name="Imose N."/>
            <person name="Musashino K."/>
            <person name="Yuuki H."/>
            <person name="Oshima A."/>
            <person name="Sasaki N."/>
            <person name="Aotsuka S."/>
            <person name="Yoshikawa Y."/>
            <person name="Matsunawa H."/>
            <person name="Ichihara T."/>
            <person name="Shiohata N."/>
            <person name="Sano S."/>
            <person name="Moriya S."/>
            <person name="Momiyama H."/>
            <person name="Satoh N."/>
            <person name="Takami S."/>
            <person name="Terashima Y."/>
            <person name="Suzuki O."/>
            <person name="Nakagawa S."/>
            <person name="Senoh A."/>
            <person name="Mizoguchi H."/>
            <person name="Goto Y."/>
            <person name="Shimizu F."/>
            <person name="Wakebe H."/>
            <person name="Hishigaki H."/>
            <person name="Watanabe T."/>
            <person name="Sugiyama A."/>
            <person name="Takemoto M."/>
            <person name="Kawakami B."/>
            <person name="Yamazaki M."/>
            <person name="Watanabe K."/>
            <person name="Kumagai A."/>
            <person name="Itakura S."/>
            <person name="Fukuzumi Y."/>
            <person name="Fujimori Y."/>
            <person name="Komiyama M."/>
            <person name="Tashiro H."/>
            <person name="Tanigami A."/>
            <person name="Fujiwara T."/>
            <person name="Ono T."/>
            <person name="Yamada K."/>
            <person name="Fujii Y."/>
            <person name="Ozaki K."/>
            <person name="Hirao M."/>
            <person name="Ohmori Y."/>
            <person name="Kawabata A."/>
            <person name="Hikiji T."/>
            <person name="Kobatake N."/>
            <person name="Inagaki H."/>
            <person name="Ikema Y."/>
            <person name="Okamoto S."/>
            <person name="Okitani R."/>
            <person name="Kawakami T."/>
            <person name="Noguchi S."/>
            <person name="Itoh T."/>
            <person name="Shigeta K."/>
            <person name="Senba T."/>
            <person name="Matsumura K."/>
            <person name="Nakajima Y."/>
            <person name="Mizuno T."/>
            <person name="Morinaga M."/>
            <person name="Sasaki M."/>
            <person name="Togashi T."/>
            <person name="Oyama M."/>
            <person name="Hata H."/>
            <person name="Watanabe M."/>
            <person name="Komatsu T."/>
            <person name="Mizushima-Sugano J."/>
            <person name="Satoh T."/>
            <person name="Shirai Y."/>
            <person name="Takahashi Y."/>
            <person name="Nakagawa K."/>
            <person name="Okumura K."/>
            <person name="Nagase T."/>
            <person name="Nomura N."/>
            <person name="Kikuchi H."/>
            <person name="Masuho Y."/>
            <person name="Yamashita R."/>
            <person name="Nakai K."/>
            <person name="Yada T."/>
            <person name="Nakamura Y."/>
            <person name="Ohara O."/>
            <person name="Isogai T."/>
            <person name="Sugano S."/>
        </authorList>
    </citation>
    <scope>NUCLEOTIDE SEQUENCE [LARGE SCALE MRNA] (ISOFORM 1)</scope>
    <source>
        <tissue>Testis</tissue>
    </source>
</reference>
<reference key="4">
    <citation type="journal article" date="2006" name="Nature">
        <title>Human chromosome 11 DNA sequence and analysis including novel gene identification.</title>
        <authorList>
            <person name="Taylor T.D."/>
            <person name="Noguchi H."/>
            <person name="Totoki Y."/>
            <person name="Toyoda A."/>
            <person name="Kuroki Y."/>
            <person name="Dewar K."/>
            <person name="Lloyd C."/>
            <person name="Itoh T."/>
            <person name="Takeda T."/>
            <person name="Kim D.-W."/>
            <person name="She X."/>
            <person name="Barlow K.F."/>
            <person name="Bloom T."/>
            <person name="Bruford E."/>
            <person name="Chang J.L."/>
            <person name="Cuomo C.A."/>
            <person name="Eichler E."/>
            <person name="FitzGerald M.G."/>
            <person name="Jaffe D.B."/>
            <person name="LaButti K."/>
            <person name="Nicol R."/>
            <person name="Park H.-S."/>
            <person name="Seaman C."/>
            <person name="Sougnez C."/>
            <person name="Yang X."/>
            <person name="Zimmer A.R."/>
            <person name="Zody M.C."/>
            <person name="Birren B.W."/>
            <person name="Nusbaum C."/>
            <person name="Fujiyama A."/>
            <person name="Hattori M."/>
            <person name="Rogers J."/>
            <person name="Lander E.S."/>
            <person name="Sakaki Y."/>
        </authorList>
    </citation>
    <scope>NUCLEOTIDE SEQUENCE [LARGE SCALE GENOMIC DNA]</scope>
</reference>
<reference evidence="11" key="5">
    <citation type="journal article" date="2008" name="Proc. Natl. Acad. Sci. U.S.A.">
        <title>A catechol-O-methyltransferase that is essential for auditory function in mice and humans.</title>
        <authorList>
            <person name="Du X."/>
            <person name="Schwander M."/>
            <person name="Moresco E.M.Y."/>
            <person name="Viviani P."/>
            <person name="Haller C."/>
            <person name="Hildebrand M.S."/>
            <person name="Pak K."/>
            <person name="Tarantino L."/>
            <person name="Roberts A."/>
            <person name="Richardson H."/>
            <person name="Koob G."/>
            <person name="Najmabadi H."/>
            <person name="Ryan A.F."/>
            <person name="Smith R.J.H."/>
            <person name="Mueller U."/>
            <person name="Beutler B."/>
        </authorList>
    </citation>
    <scope>IDENTIFICATION</scope>
    <scope>FUNCTION</scope>
    <scope>VARIANT GLN-208</scope>
    <scope>VARIANTS DFNB63 PRO-16 AND HIS-158</scope>
</reference>
<reference key="6">
    <citation type="journal article" date="2017" name="Elife">
        <title>The murine catecholamine methyltransferase mTOMT is essential for mechanotransduction by cochlear hair cells.</title>
        <authorList>
            <person name="Cunningham C.L."/>
            <person name="Wu Z."/>
            <person name="Jafari A."/>
            <person name="Zhao B."/>
            <person name="Schrode K."/>
            <person name="Harkins-Perry S."/>
            <person name="Lauer A."/>
            <person name="Mueller U."/>
        </authorList>
    </citation>
    <scope>SUBCELLULAR LOCATION</scope>
</reference>
<reference key="7">
    <citation type="journal article" date="2017" name="Genet. Test. Mol. Biomarkers">
        <title>Molecular Analysis of Twelve Pakistani Families with Nonsyndromic or Syndromic Hearing Loss.</title>
        <authorList>
            <person name="Wang R."/>
            <person name="Han S."/>
            <person name="Khan A."/>
            <person name="Zhang X."/>
        </authorList>
    </citation>
    <scope>VARIANT DFNB63 TRP-52</scope>
</reference>
<protein>
    <recommendedName>
        <fullName evidence="11">Transmembrane O-methyltransferase</fullName>
        <ecNumber evidence="1">2.1.1.6</ecNumber>
    </recommendedName>
    <alternativeName>
        <fullName evidence="9">Catechol O-methyltransferase 2</fullName>
    </alternativeName>
    <alternativeName>
        <fullName evidence="10">Protein LRTOMT2</fullName>
    </alternativeName>
</protein>
<dbReference type="EC" id="2.1.1.6" evidence="1"/>
<dbReference type="EMBL" id="EU627069">
    <property type="status" value="NOT_ANNOTATED_CDS"/>
    <property type="molecule type" value="mRNA"/>
</dbReference>
<dbReference type="EMBL" id="EU627070">
    <property type="status" value="NOT_ANNOTATED_CDS"/>
    <property type="molecule type" value="mRNA"/>
</dbReference>
<dbReference type="EMBL" id="AF289588">
    <property type="protein sequence ID" value="AAL55772.1"/>
    <property type="status" value="ALT_FRAME"/>
    <property type="molecule type" value="mRNA"/>
</dbReference>
<dbReference type="EMBL" id="AK302772">
    <property type="protein sequence ID" value="BAH13802.1"/>
    <property type="molecule type" value="mRNA"/>
</dbReference>
<dbReference type="EMBL" id="AP000812">
    <property type="status" value="NOT_ANNOTATED_CDS"/>
    <property type="molecule type" value="Genomic_DNA"/>
</dbReference>
<dbReference type="RefSeq" id="NP_001138780.1">
    <molecule id="Q8WZ04-1"/>
    <property type="nucleotide sequence ID" value="NM_001145308.4"/>
</dbReference>
<dbReference type="RefSeq" id="NP_001138781.1">
    <molecule id="Q8WZ04-1"/>
    <property type="nucleotide sequence ID" value="NM_001145309.3"/>
</dbReference>
<dbReference type="RefSeq" id="NP_001138782.1">
    <molecule id="Q8WZ04-2"/>
    <property type="nucleotide sequence ID" value="NM_001145310.3"/>
</dbReference>
<dbReference type="SMR" id="Q8WZ04"/>
<dbReference type="BioGRID" id="128624">
    <property type="interactions" value="18"/>
</dbReference>
<dbReference type="FunCoup" id="Q8WZ04">
    <property type="interactions" value="228"/>
</dbReference>
<dbReference type="IntAct" id="Q8WZ04">
    <property type="interactions" value="1"/>
</dbReference>
<dbReference type="STRING" id="9606.ENSP00000305742"/>
<dbReference type="PhosphoSitePlus" id="Q8WZ04"/>
<dbReference type="BioMuta" id="LRTOMT"/>
<dbReference type="DMDM" id="226693615"/>
<dbReference type="MassIVE" id="Q8WZ04"/>
<dbReference type="PaxDb" id="9606-ENSP00000305742"/>
<dbReference type="Antibodypedia" id="82585">
    <property type="antibodies" value="1 antibodies from 1 providers"/>
</dbReference>
<dbReference type="DNASU" id="220074"/>
<dbReference type="GeneID" id="220074"/>
<dbReference type="KEGG" id="hsa:220074"/>
<dbReference type="UCSC" id="uc010rqw.3">
    <molecule id="Q8WZ04-1"/>
    <property type="organism name" value="human"/>
</dbReference>
<dbReference type="AGR" id="HGNC:25033"/>
<dbReference type="CTD" id="220074"/>
<dbReference type="DisGeNET" id="220074"/>
<dbReference type="GeneCards" id="TOMT"/>
<dbReference type="HGNC" id="HGNC:55527">
    <property type="gene designation" value="TOMT"/>
</dbReference>
<dbReference type="HPA" id="ENSG00000284922">
    <property type="expression patterns" value="Group enriched (fallopian tube, testis)"/>
</dbReference>
<dbReference type="MalaCards" id="TOMT"/>
<dbReference type="MIM" id="611451">
    <property type="type" value="phenotype"/>
</dbReference>
<dbReference type="MIM" id="612414">
    <property type="type" value="gene"/>
</dbReference>
<dbReference type="neXtProt" id="NX_Q8WZ04"/>
<dbReference type="Orphanet" id="90636">
    <property type="disease" value="Rare autosomal recessive non-syndromic sensorineural deafness type DFNB"/>
</dbReference>
<dbReference type="PharmGKB" id="PA164722133"/>
<dbReference type="VEuPathDB" id="HostDB:ENSG00000284922"/>
<dbReference type="eggNOG" id="KOG1663">
    <property type="taxonomic scope" value="Eukaryota"/>
</dbReference>
<dbReference type="HOGENOM" id="CLU_050461_5_0_1"/>
<dbReference type="InParanoid" id="Q8WZ04"/>
<dbReference type="OMA" id="KWRVHRT"/>
<dbReference type="OrthoDB" id="676979at2759"/>
<dbReference type="PAN-GO" id="Q8WZ04">
    <property type="GO annotations" value="4 GO annotations based on evolutionary models"/>
</dbReference>
<dbReference type="PhylomeDB" id="Q8WZ04"/>
<dbReference type="TreeFam" id="TF329140"/>
<dbReference type="PathwayCommons" id="Q8WZ04"/>
<dbReference type="Reactome" id="R-HSA-379397">
    <property type="pathway name" value="Enzymatic degradation of dopamine by COMT"/>
</dbReference>
<dbReference type="BioGRID-ORCS" id="220074">
    <property type="hits" value="10 hits in 1151 CRISPR screens"/>
</dbReference>
<dbReference type="ChiTaRS" id="LRTOMT">
    <property type="organism name" value="human"/>
</dbReference>
<dbReference type="GenomeRNAi" id="220074"/>
<dbReference type="Pharos" id="Q8WZ04">
    <property type="development level" value="Tbio"/>
</dbReference>
<dbReference type="PRO" id="PR:Q8WZ04"/>
<dbReference type="Proteomes" id="UP000005640">
    <property type="component" value="Chromosome 11"/>
</dbReference>
<dbReference type="RNAct" id="Q8WZ04">
    <property type="molecule type" value="protein"/>
</dbReference>
<dbReference type="Bgee" id="ENSG00000184154">
    <property type="expression patterns" value="Expressed in right testis and 100 other cell types or tissues"/>
</dbReference>
<dbReference type="ExpressionAtlas" id="Q8WZ04">
    <property type="expression patterns" value="baseline and differential"/>
</dbReference>
<dbReference type="GO" id="GO:0005783">
    <property type="term" value="C:endoplasmic reticulum"/>
    <property type="evidence" value="ECO:0007669"/>
    <property type="project" value="UniProtKB-SubCell"/>
</dbReference>
<dbReference type="GO" id="GO:0005886">
    <property type="term" value="C:plasma membrane"/>
    <property type="evidence" value="ECO:0000304"/>
    <property type="project" value="Reactome"/>
</dbReference>
<dbReference type="GO" id="GO:0016206">
    <property type="term" value="F:catechol O-methyltransferase activity"/>
    <property type="evidence" value="ECO:0000250"/>
    <property type="project" value="UniProtKB"/>
</dbReference>
<dbReference type="GO" id="GO:0060117">
    <property type="term" value="P:auditory receptor cell development"/>
    <property type="evidence" value="ECO:0000250"/>
    <property type="project" value="UniProtKB"/>
</dbReference>
<dbReference type="GO" id="GO:0042424">
    <property type="term" value="P:catecholamine catabolic process"/>
    <property type="evidence" value="ECO:0000250"/>
    <property type="project" value="UniProtKB"/>
</dbReference>
<dbReference type="GO" id="GO:0032502">
    <property type="term" value="P:developmental process"/>
    <property type="evidence" value="ECO:0000318"/>
    <property type="project" value="GO_Central"/>
</dbReference>
<dbReference type="GO" id="GO:0042420">
    <property type="term" value="P:dopamine catabolic process"/>
    <property type="evidence" value="ECO:0000304"/>
    <property type="project" value="Reactome"/>
</dbReference>
<dbReference type="GO" id="GO:0042417">
    <property type="term" value="P:dopamine metabolic process"/>
    <property type="evidence" value="ECO:0000318"/>
    <property type="project" value="GO_Central"/>
</dbReference>
<dbReference type="GO" id="GO:0032259">
    <property type="term" value="P:methylation"/>
    <property type="evidence" value="ECO:0007669"/>
    <property type="project" value="UniProtKB-KW"/>
</dbReference>
<dbReference type="GO" id="GO:0007605">
    <property type="term" value="P:sensory perception of sound"/>
    <property type="evidence" value="ECO:0000250"/>
    <property type="project" value="UniProtKB"/>
</dbReference>
<dbReference type="CDD" id="cd02440">
    <property type="entry name" value="AdoMet_MTases"/>
    <property type="match status" value="1"/>
</dbReference>
<dbReference type="FunFam" id="3.40.50.150:FF:000054">
    <property type="entry name" value="Catechol O-methyltransferase"/>
    <property type="match status" value="1"/>
</dbReference>
<dbReference type="Gene3D" id="3.40.50.150">
    <property type="entry name" value="Vaccinia Virus protein VP39"/>
    <property type="match status" value="1"/>
</dbReference>
<dbReference type="InterPro" id="IPR029063">
    <property type="entry name" value="SAM-dependent_MTases_sf"/>
</dbReference>
<dbReference type="InterPro" id="IPR002935">
    <property type="entry name" value="SAM_O-MeTrfase"/>
</dbReference>
<dbReference type="PANTHER" id="PTHR43836">
    <property type="entry name" value="CATECHOL O-METHYLTRANSFERASE 1-RELATED"/>
    <property type="match status" value="1"/>
</dbReference>
<dbReference type="PANTHER" id="PTHR43836:SF1">
    <property type="entry name" value="TRANSMEMBRANE O-METHYLTRANSFERASE"/>
    <property type="match status" value="1"/>
</dbReference>
<dbReference type="Pfam" id="PF01596">
    <property type="entry name" value="Methyltransf_3"/>
    <property type="match status" value="1"/>
</dbReference>
<dbReference type="SUPFAM" id="SSF53335">
    <property type="entry name" value="S-adenosyl-L-methionine-dependent methyltransferases"/>
    <property type="match status" value="1"/>
</dbReference>
<dbReference type="PROSITE" id="PS51682">
    <property type="entry name" value="SAM_OMT_I"/>
    <property type="match status" value="1"/>
</dbReference>
<organism>
    <name type="scientific">Homo sapiens</name>
    <name type="common">Human</name>
    <dbReference type="NCBI Taxonomy" id="9606"/>
    <lineage>
        <taxon>Eukaryota</taxon>
        <taxon>Metazoa</taxon>
        <taxon>Chordata</taxon>
        <taxon>Craniata</taxon>
        <taxon>Vertebrata</taxon>
        <taxon>Euteleostomi</taxon>
        <taxon>Mammalia</taxon>
        <taxon>Eutheria</taxon>
        <taxon>Euarchontoglires</taxon>
        <taxon>Primates</taxon>
        <taxon>Haplorrhini</taxon>
        <taxon>Catarrhini</taxon>
        <taxon>Hominidae</taxon>
        <taxon>Homo</taxon>
    </lineage>
</organism>
<evidence type="ECO:0000250" key="1">
    <source>
        <dbReference type="UniProtKB" id="A1Y9I9"/>
    </source>
</evidence>
<evidence type="ECO:0000255" key="2"/>
<evidence type="ECO:0000255" key="3">
    <source>
        <dbReference type="PROSITE-ProRule" id="PRU01019"/>
    </source>
</evidence>
<evidence type="ECO:0000269" key="4">
    <source>
    </source>
</evidence>
<evidence type="ECO:0000269" key="5">
    <source>
    </source>
</evidence>
<evidence type="ECO:0000269" key="6">
    <source>
    </source>
</evidence>
<evidence type="ECO:0000269" key="7">
    <source>
    </source>
</evidence>
<evidence type="ECO:0000303" key="8">
    <source>
    </source>
</evidence>
<evidence type="ECO:0000303" key="9">
    <source>
    </source>
</evidence>
<evidence type="ECO:0000303" key="10">
    <source>
    </source>
</evidence>
<evidence type="ECO:0000305" key="11"/>
<evidence type="ECO:0000312" key="12">
    <source>
        <dbReference type="EMBL" id="AAL55772.1"/>
    </source>
</evidence>
<evidence type="ECO:0000312" key="13">
    <source>
        <dbReference type="HGNC" id="HGNC:55527"/>
    </source>
</evidence>
<comment type="function">
    <text evidence="1 4">Catalyzes the O-methylation, and thereby the inactivation, of catecholamine neurotransmitters and catechol hormones (By similarity). Required for auditory function (PubMed:18794526). Component of the cochlear hair cell's mechanotransduction (MET) machinery. Involved in the assembly of the asymmetric tip-link MET complex. Required for transportation of TMC1 and TMC2 proteins into the mechanically sensitive stereocilia of the hair cells. The function in MET is independent of the enzymatic activity (By similarity).</text>
</comment>
<comment type="catalytic activity">
    <reaction evidence="1">
        <text>a catechol + S-adenosyl-L-methionine = a guaiacol + S-adenosyl-L-homocysteine + H(+)</text>
        <dbReference type="Rhea" id="RHEA:17877"/>
        <dbReference type="ChEBI" id="CHEBI:15378"/>
        <dbReference type="ChEBI" id="CHEBI:33566"/>
        <dbReference type="ChEBI" id="CHEBI:57856"/>
        <dbReference type="ChEBI" id="CHEBI:59789"/>
        <dbReference type="ChEBI" id="CHEBI:134251"/>
        <dbReference type="EC" id="2.1.1.6"/>
    </reaction>
    <physiologicalReaction direction="left-to-right" evidence="1">
        <dbReference type="Rhea" id="RHEA:17878"/>
    </physiologicalReaction>
</comment>
<comment type="subunit">
    <text evidence="1">Interacts with LHFPL5, PCDH15, TMC1, TMC2 and TMIE. Interacts directly with TMC1. The interaction of TOMT with TMC1 and TMC2 is required for the transportation of TMC1/2 into the stereocilia of hair cells.</text>
</comment>
<comment type="subcellular location">
    <molecule>Isoform 1</molecule>
    <subcellularLocation>
        <location evidence="11">Membrane</location>
        <topology evidence="11">Single-pass membrane protein</topology>
    </subcellularLocation>
</comment>
<comment type="subcellular location">
    <molecule>Isoform 2</molecule>
    <subcellularLocation>
        <location evidence="7">Cytoplasm</location>
    </subcellularLocation>
    <subcellularLocation>
        <location evidence="1">Endoplasmic reticulum</location>
    </subcellularLocation>
    <text evidence="1 7">Localized to the cell body of the cochlear hair cells, but is not present in the stereocilia (PubMed:28504928). Present but not restricted to the apical cistern, Hensen's body and the subsurface cistern (By similarity).</text>
</comment>
<comment type="alternative products">
    <event type="alternative splicing"/>
    <isoform>
        <id>Q8WZ04-1</id>
        <name>1</name>
        <name>D'</name>
        <sequence type="displayed"/>
    </isoform>
    <isoform>
        <id>Q8WZ04-2</id>
        <name>2</name>
        <name>E'</name>
        <sequence type="described" ref="VSP_036898"/>
    </isoform>
</comment>
<comment type="disease" evidence="4 5 6">
    <disease id="DI-00878">
        <name>Deafness, autosomal recessive, 63</name>
        <acronym>DFNB63</acronym>
        <description>A form of non-syndromic sensorineural hearing loss. Sensorineural deafness results from damage to the neural receptors of the inner ear, the nerve pathways to the brain, or the area of the brain that receives sound information.</description>
        <dbReference type="MIM" id="611451"/>
    </disease>
    <text>The disease is caused by variants affecting the gene represented in this entry.</text>
</comment>
<comment type="miscellaneous">
    <text evidence="10">LRRC51 and TOMT were originally considered as alternative reading frames, LRTOMT1 and LRTOMT2 of the same LRTOMT gene in primates.</text>
</comment>
<comment type="similarity">
    <text evidence="3">Belongs to the class I-like SAM-binding methyltransferase superfamily. Cation-dependent O-methyltransferase family.</text>
</comment>
<comment type="sequence caution" evidence="11">
    <conflict type="frameshift">
        <sequence resource="EMBL-CDS" id="AAL55772"/>
    </conflict>
</comment>
<proteinExistence type="evidence at protein level"/>
<name>TOMT_HUMAN</name>
<feature type="chain" id="PRO_0000354093" description="Transmembrane O-methyltransferase">
    <location>
        <begin position="1"/>
        <end position="291"/>
    </location>
</feature>
<feature type="transmembrane region" description="Helical" evidence="2">
    <location>
        <begin position="31"/>
        <end position="51"/>
    </location>
</feature>
<feature type="binding site" evidence="3">
    <location>
        <position position="137"/>
    </location>
    <ligand>
        <name>S-adenosyl-L-methionine</name>
        <dbReference type="ChEBI" id="CHEBI:59789"/>
    </ligand>
</feature>
<feature type="binding site" evidence="3">
    <location>
        <begin position="139"/>
        <end position="140"/>
    </location>
    <ligand>
        <name>S-adenosyl-L-methionine</name>
        <dbReference type="ChEBI" id="CHEBI:59789"/>
    </ligand>
</feature>
<feature type="binding site" evidence="3">
    <location>
        <position position="145"/>
    </location>
    <ligand>
        <name>S-adenosyl-L-methionine</name>
        <dbReference type="ChEBI" id="CHEBI:59789"/>
    </ligand>
</feature>
<feature type="binding site" evidence="3">
    <location>
        <position position="163"/>
    </location>
    <ligand>
        <name>S-adenosyl-L-methionine</name>
        <dbReference type="ChEBI" id="CHEBI:59789"/>
    </ligand>
</feature>
<feature type="binding site" evidence="3">
    <location>
        <position position="193"/>
    </location>
    <ligand>
        <name>S-adenosyl-L-methionine</name>
        <dbReference type="ChEBI" id="CHEBI:59789"/>
    </ligand>
</feature>
<feature type="splice variant" id="VSP_036898" description="In isoform 2." evidence="8 10">
    <location>
        <begin position="28"/>
        <end position="67"/>
    </location>
</feature>
<feature type="sequence variant" id="VAR_047554" description="In DFNB63; uncertain significance; dbSNP:rs891068154." evidence="4">
    <original>L</original>
    <variation>P</variation>
    <location>
        <position position="16"/>
    </location>
</feature>
<feature type="sequence variant" id="VAR_079506" description="In DFNB63; uncertain significance; dbSNP:rs1372399805." evidence="6">
    <original>R</original>
    <variation>W</variation>
    <location>
        <position position="52"/>
    </location>
</feature>
<feature type="sequence variant" id="VAR_054955" description="In DFNB63; dbSNP:rs137853185." evidence="5">
    <original>R</original>
    <variation>Q</variation>
    <location>
        <position position="81"/>
    </location>
</feature>
<feature type="sequence variant" id="VAR_054956" description="In DFNB63; dbSNP:rs137853186." evidence="5">
    <original>W</original>
    <variation>R</variation>
    <location>
        <position position="105"/>
    </location>
</feature>
<feature type="sequence variant" id="VAR_054957" description="In DFNB63; dbSNP:rs137853187." evidence="5">
    <original>E</original>
    <variation>K</variation>
    <location>
        <position position="110"/>
    </location>
</feature>
<feature type="sequence variant" id="VAR_047555" description="In DFNB63; uncertain significance; dbSNP:rs758115449." evidence="4">
    <original>R</original>
    <variation>H</variation>
    <location>
        <position position="158"/>
    </location>
</feature>
<feature type="sequence variant" id="VAR_047556" description="In dbSNP:rs61741195." evidence="4">
    <original>R</original>
    <variation>Q</variation>
    <location>
        <position position="208"/>
    </location>
</feature>
<gene>
    <name evidence="13" type="primary">TOMT</name>
    <name evidence="9" type="synonym">COMT2</name>
    <name evidence="10" type="synonym">LRTOMT</name>
    <name type="ORF">PP7517</name>
</gene>
<keyword id="KW-0025">Alternative splicing</keyword>
<keyword id="KW-0128">Catecholamine metabolism</keyword>
<keyword id="KW-0963">Cytoplasm</keyword>
<keyword id="KW-0209">Deafness</keyword>
<keyword id="KW-0225">Disease variant</keyword>
<keyword id="KW-0256">Endoplasmic reticulum</keyword>
<keyword id="KW-1009">Hearing</keyword>
<keyword id="KW-0472">Membrane</keyword>
<keyword id="KW-0489">Methyltransferase</keyword>
<keyword id="KW-0531">Neurotransmitter degradation</keyword>
<keyword id="KW-1010">Non-syndromic deafness</keyword>
<keyword id="KW-1185">Reference proteome</keyword>
<keyword id="KW-0949">S-adenosyl-L-methionine</keyword>
<keyword id="KW-0808">Transferase</keyword>
<keyword id="KW-0812">Transmembrane</keyword>
<keyword id="KW-1133">Transmembrane helix</keyword>
<accession>Q8WZ04</accession>
<accession>B7Z816</accession>